<organism>
    <name type="scientific">Mus musculus</name>
    <name type="common">Mouse</name>
    <dbReference type="NCBI Taxonomy" id="10090"/>
    <lineage>
        <taxon>Eukaryota</taxon>
        <taxon>Metazoa</taxon>
        <taxon>Chordata</taxon>
        <taxon>Craniata</taxon>
        <taxon>Vertebrata</taxon>
        <taxon>Euteleostomi</taxon>
        <taxon>Mammalia</taxon>
        <taxon>Eutheria</taxon>
        <taxon>Euarchontoglires</taxon>
        <taxon>Glires</taxon>
        <taxon>Rodentia</taxon>
        <taxon>Myomorpha</taxon>
        <taxon>Muroidea</taxon>
        <taxon>Muridae</taxon>
        <taxon>Murinae</taxon>
        <taxon>Mus</taxon>
        <taxon>Mus</taxon>
    </lineage>
</organism>
<keyword id="KW-0217">Developmental protein</keyword>
<keyword id="KW-1015">Disulfide bond</keyword>
<keyword id="KW-0272">Extracellular matrix</keyword>
<keyword id="KW-0325">Glycoprotein</keyword>
<keyword id="KW-0449">Lipoprotein</keyword>
<keyword id="KW-1185">Reference proteome</keyword>
<keyword id="KW-0964">Secreted</keyword>
<keyword id="KW-0732">Signal</keyword>
<keyword id="KW-0879">Wnt signaling pathway</keyword>
<sequence length="354" mass="39573">MGHLLMLWVAAGMCYPALGASAWSVNNFLITRPKAYLTYTASVALGAQIGIEECKFQFAWERWNCPEHAFQFSTHNRLRAATRETSFIHAIRSAAIMYAVTKNCSMGDLENCGCDESQNGKTGGHGWIWGGCSDNVEFGEKISRLFVDSLEKGKDARALVNLHNNRAGRLAVRASTKRTCKCHGISGSCSIQTCWLQLADFRQMGNYLKAKYDRALKIEMDKRQLRAGNRAEGRWALTEAFLPSTEAELIFLEGSPDYCNRNASLSIQGTEGRECLQNARSASRREQRSCGRLCTECGLQVEERRAEAVSSCDCNFQWCCTVKCGQCRRVVSRYYCTRPVGSARPRGRGKDSAW</sequence>
<proteinExistence type="evidence at transcript level"/>
<reference key="1">
    <citation type="journal article" date="1996" name="Mech. Dev.">
        <title>A new mouse member of the Wnt gene family, mWnt-8, is expressed during early embryogenesis and is ectopically induced by retinoic acid.</title>
        <authorList>
            <person name="Bouillet P."/>
            <person name="Oulad-Abdelghani M."/>
            <person name="Ward S.J."/>
            <person name="Bronner S."/>
            <person name="Chambon P."/>
            <person name="Dolle P."/>
        </authorList>
    </citation>
    <scope>NUCLEOTIDE SEQUENCE [MRNA]</scope>
    <scope>INDUCTION BY RETINOIC ACID</scope>
    <source>
        <tissue>Embryo</tissue>
    </source>
</reference>
<reference key="2">
    <citation type="journal article" date="2009" name="PLoS Biol.">
        <title>Lineage-specific biology revealed by a finished genome assembly of the mouse.</title>
        <authorList>
            <person name="Church D.M."/>
            <person name="Goodstadt L."/>
            <person name="Hillier L.W."/>
            <person name="Zody M.C."/>
            <person name="Goldstein S."/>
            <person name="She X."/>
            <person name="Bult C.J."/>
            <person name="Agarwala R."/>
            <person name="Cherry J.L."/>
            <person name="DiCuccio M."/>
            <person name="Hlavina W."/>
            <person name="Kapustin Y."/>
            <person name="Meric P."/>
            <person name="Maglott D."/>
            <person name="Birtle Z."/>
            <person name="Marques A.C."/>
            <person name="Graves T."/>
            <person name="Zhou S."/>
            <person name="Teague B."/>
            <person name="Potamousis K."/>
            <person name="Churas C."/>
            <person name="Place M."/>
            <person name="Herschleb J."/>
            <person name="Runnheim R."/>
            <person name="Forrest D."/>
            <person name="Amos-Landgraf J."/>
            <person name="Schwartz D.C."/>
            <person name="Cheng Z."/>
            <person name="Lindblad-Toh K."/>
            <person name="Eichler E.E."/>
            <person name="Ponting C.P."/>
        </authorList>
    </citation>
    <scope>NUCLEOTIDE SEQUENCE [LARGE SCALE GENOMIC DNA]</scope>
    <source>
        <strain>C57BL/6J</strain>
    </source>
</reference>
<feature type="signal peptide" evidence="5">
    <location>
        <begin position="1"/>
        <end position="19"/>
    </location>
</feature>
<feature type="chain" id="PRO_0000041449" description="Protein Wnt-8a">
    <location>
        <begin position="20"/>
        <end position="354"/>
    </location>
</feature>
<feature type="lipid moiety-binding region" description="O-palmitoleoyl serine" evidence="1">
    <location>
        <position position="186"/>
    </location>
</feature>
<feature type="glycosylation site" description="N-linked (GlcNAc...) asparagine" evidence="5">
    <location>
        <position position="103"/>
    </location>
</feature>
<feature type="glycosylation site" description="N-linked (GlcNAc...) asparagine" evidence="5">
    <location>
        <position position="262"/>
    </location>
</feature>
<feature type="disulfide bond" evidence="1">
    <location>
        <begin position="54"/>
        <end position="65"/>
    </location>
</feature>
<feature type="disulfide bond" evidence="1">
    <location>
        <begin position="104"/>
        <end position="112"/>
    </location>
</feature>
<feature type="disulfide bond" evidence="1">
    <location>
        <begin position="114"/>
        <end position="132"/>
    </location>
</feature>
<feature type="disulfide bond" evidence="1">
    <location>
        <begin position="180"/>
        <end position="194"/>
    </location>
</feature>
<feature type="disulfide bond" evidence="1">
    <location>
        <begin position="182"/>
        <end position="189"/>
    </location>
</feature>
<feature type="disulfide bond" evidence="1">
    <location>
        <begin position="259"/>
        <end position="297"/>
    </location>
</feature>
<feature type="disulfide bond" evidence="1">
    <location>
        <begin position="275"/>
        <end position="290"/>
    </location>
</feature>
<feature type="disulfide bond" evidence="1">
    <location>
        <begin position="294"/>
        <end position="336"/>
    </location>
</feature>
<feature type="disulfide bond" evidence="1">
    <location>
        <begin position="312"/>
        <end position="327"/>
    </location>
</feature>
<feature type="disulfide bond" evidence="1">
    <location>
        <begin position="314"/>
        <end position="324"/>
    </location>
</feature>
<feature type="disulfide bond" evidence="1">
    <location>
        <begin position="319"/>
        <end position="320"/>
    </location>
</feature>
<feature type="sequence conflict" description="In Ref. 1; CAA93117." evidence="7" ref="1">
    <original>R</original>
    <variation>G</variation>
    <location>
        <position position="32"/>
    </location>
</feature>
<dbReference type="EMBL" id="Z68889">
    <property type="protein sequence ID" value="CAA93117.1"/>
    <property type="molecule type" value="mRNA"/>
</dbReference>
<dbReference type="EMBL" id="AC074335">
    <property type="status" value="NOT_ANNOTATED_CDS"/>
    <property type="molecule type" value="Genomic_DNA"/>
</dbReference>
<dbReference type="CCDS" id="CCDS29129.1"/>
<dbReference type="RefSeq" id="NP_033316.2">
    <property type="nucleotide sequence ID" value="NM_009290.3"/>
</dbReference>
<dbReference type="SMR" id="Q64527"/>
<dbReference type="BioGRID" id="203552">
    <property type="interactions" value="2"/>
</dbReference>
<dbReference type="FunCoup" id="Q64527">
    <property type="interactions" value="631"/>
</dbReference>
<dbReference type="STRING" id="10090.ENSMUSP00000012426"/>
<dbReference type="GlyCosmos" id="Q64527">
    <property type="glycosylation" value="2 sites, No reported glycans"/>
</dbReference>
<dbReference type="GlyGen" id="Q64527">
    <property type="glycosylation" value="2 sites"/>
</dbReference>
<dbReference type="PhosphoSitePlus" id="Q64527"/>
<dbReference type="PaxDb" id="10090-ENSMUSP00000012426"/>
<dbReference type="Antibodypedia" id="26566">
    <property type="antibodies" value="217 antibodies from 31 providers"/>
</dbReference>
<dbReference type="DNASU" id="20890"/>
<dbReference type="Ensembl" id="ENSMUST00000012426.3">
    <property type="protein sequence ID" value="ENSMUSP00000012426.3"/>
    <property type="gene ID" value="ENSMUSG00000012282.3"/>
</dbReference>
<dbReference type="GeneID" id="20890"/>
<dbReference type="KEGG" id="mmu:20890"/>
<dbReference type="AGR" id="MGI:107924"/>
<dbReference type="CTD" id="7478"/>
<dbReference type="MGI" id="MGI:107924">
    <property type="gene designation" value="Wnt8a"/>
</dbReference>
<dbReference type="VEuPathDB" id="HostDB:ENSMUSG00000012282"/>
<dbReference type="eggNOG" id="KOG3913">
    <property type="taxonomic scope" value="Eukaryota"/>
</dbReference>
<dbReference type="GeneTree" id="ENSGT00940000157840"/>
<dbReference type="HOGENOM" id="CLU_033039_1_2_1"/>
<dbReference type="InParanoid" id="Q64527"/>
<dbReference type="OMA" id="ASCNCKF"/>
<dbReference type="OrthoDB" id="5945655at2759"/>
<dbReference type="PhylomeDB" id="Q64527"/>
<dbReference type="TreeFam" id="TF105310"/>
<dbReference type="Reactome" id="R-MMU-3238698">
    <property type="pathway name" value="WNT ligand biogenesis and trafficking"/>
</dbReference>
<dbReference type="Reactome" id="R-MMU-4641262">
    <property type="pathway name" value="Disassembly of the destruction complex and recruitment of AXIN to the membrane"/>
</dbReference>
<dbReference type="BioGRID-ORCS" id="20890">
    <property type="hits" value="3 hits in 76 CRISPR screens"/>
</dbReference>
<dbReference type="PRO" id="PR:Q64527"/>
<dbReference type="Proteomes" id="UP000000589">
    <property type="component" value="Chromosome 18"/>
</dbReference>
<dbReference type="RNAct" id="Q64527">
    <property type="molecule type" value="protein"/>
</dbReference>
<dbReference type="Bgee" id="ENSMUSG00000012282">
    <property type="expression patterns" value="Expressed in primitive streak and 73 other cell types or tissues"/>
</dbReference>
<dbReference type="GO" id="GO:0005576">
    <property type="term" value="C:extracellular region"/>
    <property type="evidence" value="ECO:0007669"/>
    <property type="project" value="UniProtKB-SubCell"/>
</dbReference>
<dbReference type="GO" id="GO:0005102">
    <property type="term" value="F:signaling receptor binding"/>
    <property type="evidence" value="ECO:0007669"/>
    <property type="project" value="InterPro"/>
</dbReference>
<dbReference type="GO" id="GO:0000902">
    <property type="term" value="P:cell morphogenesis"/>
    <property type="evidence" value="ECO:0000315"/>
    <property type="project" value="MGI"/>
</dbReference>
<dbReference type="GO" id="GO:0007492">
    <property type="term" value="P:endoderm development"/>
    <property type="evidence" value="ECO:0000315"/>
    <property type="project" value="MGI"/>
</dbReference>
<dbReference type="GO" id="GO:0048561">
    <property type="term" value="P:establishment of animal organ orientation"/>
    <property type="evidence" value="ECO:0000315"/>
    <property type="project" value="MGI"/>
</dbReference>
<dbReference type="GO" id="GO:0009949">
    <property type="term" value="P:polarity specification of anterior/posterior axis"/>
    <property type="evidence" value="ECO:0000315"/>
    <property type="project" value="MGI"/>
</dbReference>
<dbReference type="GO" id="GO:0010085">
    <property type="term" value="P:polarity specification of proximal/distal axis"/>
    <property type="evidence" value="ECO:0000315"/>
    <property type="project" value="MGI"/>
</dbReference>
<dbReference type="GO" id="GO:0003002">
    <property type="term" value="P:regionalization"/>
    <property type="evidence" value="ECO:0000315"/>
    <property type="project" value="MGI"/>
</dbReference>
<dbReference type="GO" id="GO:0032880">
    <property type="term" value="P:regulation of protein localization"/>
    <property type="evidence" value="ECO:0000315"/>
    <property type="project" value="MGI"/>
</dbReference>
<dbReference type="GO" id="GO:0016055">
    <property type="term" value="P:Wnt signaling pathway"/>
    <property type="evidence" value="ECO:0007669"/>
    <property type="project" value="UniProtKB-KW"/>
</dbReference>
<dbReference type="FunFam" id="3.30.2460.20:FF:000003">
    <property type="entry name" value="Protein Wnt"/>
    <property type="match status" value="1"/>
</dbReference>
<dbReference type="Gene3D" id="3.30.2460.20">
    <property type="match status" value="1"/>
</dbReference>
<dbReference type="InterPro" id="IPR005817">
    <property type="entry name" value="Wnt"/>
</dbReference>
<dbReference type="InterPro" id="IPR013301">
    <property type="entry name" value="Wnt8"/>
</dbReference>
<dbReference type="InterPro" id="IPR043158">
    <property type="entry name" value="Wnt_C"/>
</dbReference>
<dbReference type="InterPro" id="IPR018161">
    <property type="entry name" value="Wnt_CS"/>
</dbReference>
<dbReference type="PANTHER" id="PTHR12027:SF92">
    <property type="entry name" value="PROTEIN WNT-8A"/>
    <property type="match status" value="1"/>
</dbReference>
<dbReference type="PANTHER" id="PTHR12027">
    <property type="entry name" value="WNT RELATED"/>
    <property type="match status" value="1"/>
</dbReference>
<dbReference type="Pfam" id="PF00110">
    <property type="entry name" value="wnt"/>
    <property type="match status" value="1"/>
</dbReference>
<dbReference type="PRINTS" id="PR01892">
    <property type="entry name" value="WNT8PROTEIN"/>
</dbReference>
<dbReference type="PRINTS" id="PR01349">
    <property type="entry name" value="WNTPROTEIN"/>
</dbReference>
<dbReference type="SMART" id="SM00097">
    <property type="entry name" value="WNT1"/>
    <property type="match status" value="1"/>
</dbReference>
<dbReference type="PROSITE" id="PS00246">
    <property type="entry name" value="WNT1"/>
    <property type="match status" value="1"/>
</dbReference>
<name>WNT8A_MOUSE</name>
<gene>
    <name type="primary">Wnt8a</name>
    <name type="synonym">Stra11</name>
    <name type="synonym">Wnt8d</name>
</gene>
<protein>
    <recommendedName>
        <fullName>Protein Wnt-8a</fullName>
    </recommendedName>
    <alternativeName>
        <fullName>Protein Wnt-8d</fullName>
    </alternativeName>
    <alternativeName>
        <fullName>Stimulated by retinoic acid gene 11 protein</fullName>
    </alternativeName>
</protein>
<comment type="function">
    <text evidence="2">Ligand for members of the frizzled family of seven transmembrane receptors. Plays a role in embryonic patterning.</text>
</comment>
<comment type="subunit">
    <text evidence="4">Forms a soluble 1:1 complex with AFM; this prevents oligomerization and is required for prolonged biological activity. The complex with AFM may represent the physiological form in body fluids.</text>
</comment>
<comment type="subcellular location">
    <subcellularLocation>
        <location evidence="4">Secreted</location>
        <location evidence="4">Extracellular space</location>
        <location evidence="4">Extracellular matrix</location>
    </subcellularLocation>
    <subcellularLocation>
        <location evidence="4">Secreted</location>
    </subcellularLocation>
</comment>
<comment type="developmental stage">
    <text>Expression in early stages of embryogenesis. Expression begins in the posterior region of early primitive streak-stage embryos and after it spreads into the embryonic ectoderm up to a sharp rostral boundary at the base of the developing headfolds. Expressed transiently in the newly formed mesoderm. Expression is down-regulated during somitogenesis. The expression is highly restricted during gastrulation and neurulation, both temporally and spatially.</text>
</comment>
<comment type="induction">
    <text evidence="6">By retinoic acid.</text>
</comment>
<comment type="PTM">
    <text evidence="1 3">Palmitoleoylation is required for efficient binding to frizzled receptors (By similarity). Depalmitoleoylation leads to Wnt signaling pathway inhibition (By similarity).</text>
</comment>
<comment type="PTM">
    <text evidence="1">Proteolytic processing by TIKI1 and TIKI2 promotes oxidation and formation of large disulfide-bond oligomers, leading to inactivation of WNT8A.</text>
</comment>
<comment type="similarity">
    <text evidence="7">Belongs to the Wnt family.</text>
</comment>
<evidence type="ECO:0000250" key="1">
    <source>
        <dbReference type="UniProtKB" id="P28026"/>
    </source>
</evidence>
<evidence type="ECO:0000250" key="2">
    <source>
        <dbReference type="UniProtKB" id="P51028"/>
    </source>
</evidence>
<evidence type="ECO:0000250" key="3">
    <source>
        <dbReference type="UniProtKB" id="P56704"/>
    </source>
</evidence>
<evidence type="ECO:0000250" key="4">
    <source>
        <dbReference type="UniProtKB" id="Q9H1J5"/>
    </source>
</evidence>
<evidence type="ECO:0000255" key="5"/>
<evidence type="ECO:0000269" key="6">
    <source>
    </source>
</evidence>
<evidence type="ECO:0000305" key="7"/>
<accession>Q64527</accession>
<accession>E9QL90</accession>